<protein>
    <recommendedName>
        <fullName>Trimethylamine-N-oxide reductase</fullName>
        <shortName>TMAO reductase</shortName>
        <shortName>Trimethylamine oxidase</shortName>
        <ecNumber>1.7.2.3</ecNumber>
    </recommendedName>
</protein>
<gene>
    <name type="primary">torA</name>
    <name type="ordered locus">VV1_2895</name>
</gene>
<proteinExistence type="inferred from homology"/>
<organism>
    <name type="scientific">Vibrio vulnificus (strain CMCP6)</name>
    <dbReference type="NCBI Taxonomy" id="216895"/>
    <lineage>
        <taxon>Bacteria</taxon>
        <taxon>Pseudomonadati</taxon>
        <taxon>Pseudomonadota</taxon>
        <taxon>Gammaproteobacteria</taxon>
        <taxon>Vibrionales</taxon>
        <taxon>Vibrionaceae</taxon>
        <taxon>Vibrio</taxon>
    </lineage>
</organism>
<name>TORA_VIBVU</name>
<evidence type="ECO:0000250" key="1"/>
<evidence type="ECO:0000255" key="2">
    <source>
        <dbReference type="PROSITE-ProRule" id="PRU00648"/>
    </source>
</evidence>
<evidence type="ECO:0000305" key="3"/>
<comment type="function">
    <text evidence="1">Reduces trimethylamine-N-oxide (TMAO) into trimethylamine; an anaerobic reaction coupled to energy-yielding reactions.</text>
</comment>
<comment type="catalytic activity">
    <reaction>
        <text>trimethylamine + 2 Fe(III)-[cytochrome c] + H2O = trimethylamine N-oxide + 2 Fe(II)-[cytochrome c] + 3 H(+)</text>
        <dbReference type="Rhea" id="RHEA:24236"/>
        <dbReference type="Rhea" id="RHEA-COMP:10350"/>
        <dbReference type="Rhea" id="RHEA-COMP:14399"/>
        <dbReference type="ChEBI" id="CHEBI:15377"/>
        <dbReference type="ChEBI" id="CHEBI:15378"/>
        <dbReference type="ChEBI" id="CHEBI:15724"/>
        <dbReference type="ChEBI" id="CHEBI:29033"/>
        <dbReference type="ChEBI" id="CHEBI:29034"/>
        <dbReference type="ChEBI" id="CHEBI:58389"/>
        <dbReference type="EC" id="1.7.2.3"/>
    </reaction>
</comment>
<comment type="cofactor">
    <cofactor evidence="1">
        <name>Mo-bis(molybdopterin guanine dinucleotide)</name>
        <dbReference type="ChEBI" id="CHEBI:60539"/>
    </cofactor>
    <text evidence="1">Binds 1 molybdenum-bis(molybdopterin guanine dinucleotide) (Mo-bis-MGD) cofactor per subunit.</text>
</comment>
<comment type="subcellular location">
    <subcellularLocation>
        <location evidence="1">Periplasm</location>
    </subcellularLocation>
</comment>
<comment type="PTM">
    <text>Predicted to be exported by the Tat system. The position of the signal peptide cleavage has not been experimentally proven.</text>
</comment>
<comment type="similarity">
    <text evidence="3">Belongs to the prokaryotic molybdopterin-containing oxidoreductase family.</text>
</comment>
<reference key="1">
    <citation type="submission" date="2002-12" db="EMBL/GenBank/DDBJ databases">
        <title>Complete genome sequence of Vibrio vulnificus CMCP6.</title>
        <authorList>
            <person name="Rhee J.H."/>
            <person name="Kim S.Y."/>
            <person name="Chung S.S."/>
            <person name="Kim J.J."/>
            <person name="Moon Y.H."/>
            <person name="Jeong H."/>
            <person name="Choy H.E."/>
        </authorList>
    </citation>
    <scope>NUCLEOTIDE SEQUENCE [LARGE SCALE GENOMIC DNA]</scope>
    <source>
        <strain>CMCP6</strain>
    </source>
</reference>
<sequence>MAITRRSFLKGVATTSAASVIGPSLLASASANAVETTGTWKVSGSHWGAFRAHIYAGKVQEIKPIELDQNPTEMLNGIKGIIYSPSRVRYPMVRLDWLKKHKYSADTRGNNRFVRVTWDEALDLFYRELERVQKEYGPWALHAGQTGWNQTGSFNNCTAHMQRAVGMHGNYITKVGDYSTGAGQTILPYVLGSTEVYAQGTSWSEILENADNIILWANDPVKNLQVGWNCETHESYAYLAQLKEKVAKGEINVISVDPVKNKTQRYLENDHLYVNPMTDVPFMLAIAHVLYTENLYDKKFIETYCLGFEEFINYVQGKTKDKVEKTPEWAAPICGVKADKIREFARMLVKGRTQILMGWCIQRQEHGEQPYWAAAVVAAMIGQIGLPGGGISYGHHYSSIGVPSTGFAGPGGFPRNLDAGMKPKWDNNDFNGYSRTIPVARWIDCLLEPGKEINYNGGKVKLPDFKMMVISGCNPWHHHQDRNRMKQAFQKLQTVVTIDFAWTATCRFSDIVLPACTQWERNDIDVYGSYSSRGLIAMHRLVDPLFQSKPDFQIMKELTERFGRSEEYSRGMSEMDWIRSLYNDCKKSNEGKFEMPEFDEFWEKSVLDFGQGQPWVRHADFRQDPEINPLGTPSGFIEITSRKIGRYGYEHCQEHPMWFEKSERSHGGPGSDKHPFWLQSCHPDKRLHSQMCESEEFRATYAVKGREPVYINPLDAKAKGIKEGDLVRVFNDRGQLLAGAVLTDSYPRGVIRIEEGAWYGPLNEKVGAIDTYGDPNTLTQDIGSSELAQATSANTCIVDFEKFTGKVPPVTSFGGPIEVA</sequence>
<accession>Q8D8S3</accession>
<dbReference type="EC" id="1.7.2.3"/>
<dbReference type="EMBL" id="AE016795">
    <property type="protein sequence ID" value="AAO11229.2"/>
    <property type="molecule type" value="Genomic_DNA"/>
</dbReference>
<dbReference type="RefSeq" id="WP_011080716.1">
    <property type="nucleotide sequence ID" value="NC_004459.3"/>
</dbReference>
<dbReference type="SMR" id="Q8D8S3"/>
<dbReference type="KEGG" id="vvu:VV1_2895"/>
<dbReference type="HOGENOM" id="CLU_000422_13_3_6"/>
<dbReference type="Proteomes" id="UP000002275">
    <property type="component" value="Chromosome 1"/>
</dbReference>
<dbReference type="GO" id="GO:0030288">
    <property type="term" value="C:outer membrane-bounded periplasmic space"/>
    <property type="evidence" value="ECO:0007669"/>
    <property type="project" value="TreeGrafter"/>
</dbReference>
<dbReference type="GO" id="GO:0009055">
    <property type="term" value="F:electron transfer activity"/>
    <property type="evidence" value="ECO:0007669"/>
    <property type="project" value="TreeGrafter"/>
</dbReference>
<dbReference type="GO" id="GO:0030151">
    <property type="term" value="F:molybdenum ion binding"/>
    <property type="evidence" value="ECO:0007669"/>
    <property type="project" value="InterPro"/>
</dbReference>
<dbReference type="GO" id="GO:0043546">
    <property type="term" value="F:molybdopterin cofactor binding"/>
    <property type="evidence" value="ECO:0007669"/>
    <property type="project" value="InterPro"/>
</dbReference>
<dbReference type="GO" id="GO:0050626">
    <property type="term" value="F:trimethylamine-N-oxide reductase (cytochrome c) activity"/>
    <property type="evidence" value="ECO:0007669"/>
    <property type="project" value="UniProtKB-EC"/>
</dbReference>
<dbReference type="GO" id="GO:0009061">
    <property type="term" value="P:anaerobic respiration"/>
    <property type="evidence" value="ECO:0007669"/>
    <property type="project" value="TreeGrafter"/>
</dbReference>
<dbReference type="CDD" id="cd02793">
    <property type="entry name" value="MopB_CT_DMSOR-BSOR-TMAOR"/>
    <property type="match status" value="1"/>
</dbReference>
<dbReference type="FunFam" id="2.40.40.20:FF:000009">
    <property type="entry name" value="Biotin sulfoxide reductase 2"/>
    <property type="match status" value="1"/>
</dbReference>
<dbReference type="Gene3D" id="2.40.40.20">
    <property type="match status" value="1"/>
</dbReference>
<dbReference type="Gene3D" id="3.40.50.740">
    <property type="match status" value="1"/>
</dbReference>
<dbReference type="Gene3D" id="3.40.228.10">
    <property type="entry name" value="Dimethylsulfoxide Reductase, domain 2"/>
    <property type="match status" value="1"/>
</dbReference>
<dbReference type="Gene3D" id="3.90.55.10">
    <property type="entry name" value="Dimethylsulfoxide Reductase, domain 3"/>
    <property type="match status" value="1"/>
</dbReference>
<dbReference type="InterPro" id="IPR009010">
    <property type="entry name" value="Asp_de-COase-like_dom_sf"/>
</dbReference>
<dbReference type="InterPro" id="IPR041954">
    <property type="entry name" value="CT_DMSOR/BSOR/TMAOR"/>
</dbReference>
<dbReference type="InterPro" id="IPR041460">
    <property type="entry name" value="Molybdopterin_N"/>
</dbReference>
<dbReference type="InterPro" id="IPR006657">
    <property type="entry name" value="MoPterin_dinucl-bd_dom"/>
</dbReference>
<dbReference type="InterPro" id="IPR006656">
    <property type="entry name" value="Mopterin_OxRdtase"/>
</dbReference>
<dbReference type="InterPro" id="IPR006655">
    <property type="entry name" value="Mopterin_OxRdtase_prok_CS"/>
</dbReference>
<dbReference type="InterPro" id="IPR050612">
    <property type="entry name" value="Prok_Mopterin_Oxidored"/>
</dbReference>
<dbReference type="InterPro" id="IPR006311">
    <property type="entry name" value="TAT_signal"/>
</dbReference>
<dbReference type="InterPro" id="IPR019546">
    <property type="entry name" value="TAT_signal_bac_arc"/>
</dbReference>
<dbReference type="InterPro" id="IPR011887">
    <property type="entry name" value="TorA"/>
</dbReference>
<dbReference type="NCBIfam" id="NF011682">
    <property type="entry name" value="PRK15102.1"/>
    <property type="match status" value="1"/>
</dbReference>
<dbReference type="NCBIfam" id="TIGR01409">
    <property type="entry name" value="TAT_signal_seq"/>
    <property type="match status" value="1"/>
</dbReference>
<dbReference type="NCBIfam" id="TIGR02164">
    <property type="entry name" value="torA"/>
    <property type="match status" value="1"/>
</dbReference>
<dbReference type="PANTHER" id="PTHR43742">
    <property type="entry name" value="TRIMETHYLAMINE-N-OXIDE REDUCTASE"/>
    <property type="match status" value="1"/>
</dbReference>
<dbReference type="PANTHER" id="PTHR43742:SF4">
    <property type="entry name" value="TRIMETHYLAMINE-N-OXIDE REDUCTASE 1"/>
    <property type="match status" value="1"/>
</dbReference>
<dbReference type="Pfam" id="PF00384">
    <property type="entry name" value="Molybdopterin"/>
    <property type="match status" value="1"/>
</dbReference>
<dbReference type="Pfam" id="PF18364">
    <property type="entry name" value="Molybdopterin_N"/>
    <property type="match status" value="1"/>
</dbReference>
<dbReference type="Pfam" id="PF01568">
    <property type="entry name" value="Molydop_binding"/>
    <property type="match status" value="1"/>
</dbReference>
<dbReference type="SUPFAM" id="SSF50692">
    <property type="entry name" value="ADC-like"/>
    <property type="match status" value="1"/>
</dbReference>
<dbReference type="SUPFAM" id="SSF53706">
    <property type="entry name" value="Formate dehydrogenase/DMSO reductase, domains 1-3"/>
    <property type="match status" value="1"/>
</dbReference>
<dbReference type="PROSITE" id="PS00490">
    <property type="entry name" value="MOLYBDOPTERIN_PROK_2"/>
    <property type="match status" value="1"/>
</dbReference>
<dbReference type="PROSITE" id="PS00932">
    <property type="entry name" value="MOLYBDOPTERIN_PROK_3"/>
    <property type="match status" value="1"/>
</dbReference>
<dbReference type="PROSITE" id="PS51318">
    <property type="entry name" value="TAT"/>
    <property type="match status" value="1"/>
</dbReference>
<keyword id="KW-0479">Metal-binding</keyword>
<keyword id="KW-0500">Molybdenum</keyword>
<keyword id="KW-0560">Oxidoreductase</keyword>
<keyword id="KW-0574">Periplasm</keyword>
<keyword id="KW-0732">Signal</keyword>
<feature type="signal peptide" description="Tat-type signal" evidence="2">
    <location>
        <begin position="1"/>
        <end position="33"/>
    </location>
</feature>
<feature type="chain" id="PRO_0000019161" description="Trimethylamine-N-oxide reductase">
    <location>
        <begin position="34"/>
        <end position="820"/>
    </location>
</feature>
<feature type="binding site" evidence="1">
    <location>
        <position position="179"/>
    </location>
    <ligand>
        <name>Mo-bis(molybdopterin guanine dinucleotide)</name>
        <dbReference type="ChEBI" id="CHEBI:60539"/>
    </ligand>
    <ligandPart>
        <name>Mo</name>
        <dbReference type="ChEBI" id="CHEBI:28685"/>
    </ligandPart>
</feature>